<dbReference type="EMBL" id="U16172">
    <property type="protein sequence ID" value="AAC48985.1"/>
    <property type="molecule type" value="Genomic_DNA"/>
</dbReference>
<dbReference type="EMBL" id="U15798">
    <property type="protein sequence ID" value="AAC48985.1"/>
    <property type="status" value="JOINED"/>
    <property type="molecule type" value="Genomic_DNA"/>
</dbReference>
<dbReference type="EMBL" id="U16171">
    <property type="protein sequence ID" value="AAC48985.1"/>
    <property type="status" value="JOINED"/>
    <property type="molecule type" value="Genomic_DNA"/>
</dbReference>
<dbReference type="PIR" id="T03240">
    <property type="entry name" value="T03240"/>
</dbReference>
<dbReference type="SMR" id="Q40504"/>
<dbReference type="STRING" id="4097.Q40504"/>
<dbReference type="PaxDb" id="4097-Q40504"/>
<dbReference type="Proteomes" id="UP000084051">
    <property type="component" value="Unplaced"/>
</dbReference>
<dbReference type="GO" id="GO:0005634">
    <property type="term" value="C:nucleus"/>
    <property type="evidence" value="ECO:0007669"/>
    <property type="project" value="UniProtKB-SubCell"/>
</dbReference>
<dbReference type="GO" id="GO:0003677">
    <property type="term" value="F:DNA binding"/>
    <property type="evidence" value="ECO:0007669"/>
    <property type="project" value="UniProtKB-KW"/>
</dbReference>
<dbReference type="GO" id="GO:0006355">
    <property type="term" value="P:regulation of DNA-templated transcription"/>
    <property type="evidence" value="ECO:0007669"/>
    <property type="project" value="InterPro"/>
</dbReference>
<dbReference type="Gene3D" id="1.10.4180.10">
    <property type="entry name" value="Protein LEAFY"/>
    <property type="match status" value="1"/>
</dbReference>
<dbReference type="InterPro" id="IPR035209">
    <property type="entry name" value="FLO/LFY_C"/>
</dbReference>
<dbReference type="InterPro" id="IPR002910">
    <property type="entry name" value="FLO_LFY"/>
</dbReference>
<dbReference type="InterPro" id="IPR038276">
    <property type="entry name" value="Floricaula/leafy_C_sf"/>
</dbReference>
<dbReference type="InterPro" id="IPR035079">
    <property type="entry name" value="LFY_SAM"/>
</dbReference>
<dbReference type="PANTHER" id="PTHR36079">
    <property type="entry name" value="PROTEIN LEAFY"/>
    <property type="match status" value="1"/>
</dbReference>
<dbReference type="PANTHER" id="PTHR36079:SF1">
    <property type="entry name" value="PROTEIN LEAFY"/>
    <property type="match status" value="1"/>
</dbReference>
<dbReference type="Pfam" id="PF17538">
    <property type="entry name" value="C_LFY_FLO"/>
    <property type="match status" value="1"/>
</dbReference>
<dbReference type="Pfam" id="PF01698">
    <property type="entry name" value="SAM_LFY"/>
    <property type="match status" value="1"/>
</dbReference>
<evidence type="ECO:0000250" key="1"/>
<evidence type="ECO:0000256" key="2">
    <source>
        <dbReference type="SAM" id="MobiDB-lite"/>
    </source>
</evidence>
<evidence type="ECO:0000305" key="3"/>
<keyword id="KW-0010">Activator</keyword>
<keyword id="KW-0217">Developmental protein</keyword>
<keyword id="KW-0238">DNA-binding</keyword>
<keyword id="KW-0539">Nucleus</keyword>
<keyword id="KW-1185">Reference proteome</keyword>
<keyword id="KW-0804">Transcription</keyword>
<keyword id="KW-0805">Transcription regulation</keyword>
<protein>
    <recommendedName>
        <fullName>Floricaula/leafy homolog 1</fullName>
    </recommendedName>
    <alternativeName>
        <fullName>NFL1</fullName>
    </alternativeName>
</protein>
<name>FL1_TOBAC</name>
<feature type="chain" id="PRO_0000129156" description="Floricaula/leafy homolog 1">
    <location>
        <begin position="1"/>
        <end position="413"/>
    </location>
</feature>
<feature type="DNA-binding region" evidence="1">
    <location>
        <begin position="238"/>
        <end position="242"/>
    </location>
</feature>
<feature type="DNA-binding region" evidence="1">
    <location>
        <begin position="307"/>
        <end position="314"/>
    </location>
</feature>
<feature type="DNA-binding region" evidence="1">
    <location>
        <begin position="378"/>
        <end position="381"/>
    </location>
</feature>
<feature type="region of interest" description="Disordered" evidence="2">
    <location>
        <begin position="154"/>
        <end position="177"/>
    </location>
</feature>
<feature type="region of interest" description="Disordered" evidence="2">
    <location>
        <begin position="191"/>
        <end position="239"/>
    </location>
</feature>
<feature type="compositionally biased region" description="Basic and acidic residues" evidence="2">
    <location>
        <begin position="201"/>
        <end position="210"/>
    </location>
</feature>
<feature type="compositionally biased region" description="Acidic residues" evidence="2">
    <location>
        <begin position="211"/>
        <end position="225"/>
    </location>
</feature>
<feature type="site" description="Interaction with DNA" evidence="1">
    <location>
        <position position="285"/>
    </location>
</feature>
<feature type="site" description="Interaction with DNA" evidence="1">
    <location>
        <position position="292"/>
    </location>
</feature>
<feature type="site" description="Interaction with DNA" evidence="1">
    <location>
        <position position="296"/>
    </location>
</feature>
<feature type="site" description="Interaction with DNA" evidence="1">
    <location>
        <position position="343"/>
    </location>
</feature>
<comment type="function">
    <text>Probable transcription factor that act to specify determinacy in the progenitor cells for both flowers and leaves.</text>
</comment>
<comment type="subcellular location">
    <subcellularLocation>
        <location evidence="3">Nucleus</location>
    </subcellularLocation>
</comment>
<comment type="tissue specificity">
    <text>Expressed in floral meristems and in indeterminate vegetative meristems.</text>
</comment>
<comment type="similarity">
    <text evidence="3">Belongs to the FLO/LFY family.</text>
</comment>
<accession>Q40504</accession>
<gene>
    <name type="primary">FL1</name>
</gene>
<reference key="1">
    <citation type="journal article" date="1995" name="Plant Cell">
        <title>NFL, the tobacco homolog of FLORICAULA and LEAFY, is transcriptionally expressed in both vegetative and floral meristems.</title>
        <authorList>
            <person name="Kelly A.J."/>
            <person name="Bonnlander M.B."/>
            <person name="Meeks-Wagner D.R."/>
        </authorList>
    </citation>
    <scope>NUCLEOTIDE SEQUENCE [GENOMIC DNA]</scope>
    <source>
        <strain>cv. Samsun</strain>
    </source>
</reference>
<sequence>MDPEAFSASLFKWDPRGAMPPPTRLLEAAVAPPPPPPVLPPPQPLSAAYSIRTRELGGLEELFQAYGIRYYTAAKIAELGFTVNTLLDMKDEELDDMMNSLSQIFRWELLVGERYGIKAAIRAERRRLEEEELRRRSHLLSDGGTNALDALSQEGLSEEPVQQQEREAVGSGGGGTTWEVVAAVGGGRMKQRRRKKVVSTGRERRGRASAEEDEETEEGQEDEWNINDAGGGISERQREHPFIVTEPGEVARGKKNGLDYLFHLYEQCRDFLIQVQNIAKERGEKCPTKVTNQVFRYAKKAGASYINKPKMRHYVHCYALHCLDEEASNALRRAFKERGENVGAWRQACYKPLVAIAARQGWDIDTIFNAHPRLAIWYVPTRLRQLCHSERSNAAAAASSSVSGGVGDHLPHF</sequence>
<proteinExistence type="evidence at transcript level"/>
<organism>
    <name type="scientific">Nicotiana tabacum</name>
    <name type="common">Common tobacco</name>
    <dbReference type="NCBI Taxonomy" id="4097"/>
    <lineage>
        <taxon>Eukaryota</taxon>
        <taxon>Viridiplantae</taxon>
        <taxon>Streptophyta</taxon>
        <taxon>Embryophyta</taxon>
        <taxon>Tracheophyta</taxon>
        <taxon>Spermatophyta</taxon>
        <taxon>Magnoliopsida</taxon>
        <taxon>eudicotyledons</taxon>
        <taxon>Gunneridae</taxon>
        <taxon>Pentapetalae</taxon>
        <taxon>asterids</taxon>
        <taxon>lamiids</taxon>
        <taxon>Solanales</taxon>
        <taxon>Solanaceae</taxon>
        <taxon>Nicotianoideae</taxon>
        <taxon>Nicotianeae</taxon>
        <taxon>Nicotiana</taxon>
    </lineage>
</organism>